<comment type="function">
    <text evidence="2 3 4 5">Disease resistance (R) protein. Resistance proteins guard the plant against pathogens that contain an appropriate avirulence protein via an indirect interaction with this avirulence protein. That triggers a defense system including the hypersensitive response, which restricts the pathogen growth. Contribution of RGA5 is required to recognize the effector avirulence proteins AVR-Pia and AVR1-CO39 from M.oryzae (PubMed:21251109, PubMed:23548743). Acts as a constitutively active cell death inducer that is repressed by RGA5 (PubMed:25024433). Immune response triggered by the RGA4-RGA5 -mediated recognition of AVR1-CO39 confers resistance to X.oryzae pathovars (PubMed:27289079).</text>
</comment>
<comment type="subunit">
    <text evidence="4">Forms homodimer or heterodimer with RGA5 through its coiled coil (CC) domain.</text>
</comment>
<comment type="subcellular location">
    <subcellularLocation>
        <location evidence="4">Cytoplasm</location>
    </subcellularLocation>
</comment>
<comment type="tissue specificity">
    <text evidence="2">Expressed in leaves.</text>
</comment>
<comment type="similarity">
    <text evidence="7">Belongs to the disease resistance NB-LRR family.</text>
</comment>
<gene>
    <name evidence="6" type="primary">RGA4</name>
    <name evidence="6" type="synonym">PIA</name>
</gene>
<protein>
    <recommendedName>
        <fullName evidence="7">Disease resistance protein RGA4</fullName>
    </recommendedName>
    <alternativeName>
        <fullName evidence="10">Os11gRGA4</fullName>
    </alternativeName>
    <alternativeName>
        <fullName evidence="6">SasRGA4</fullName>
    </alternativeName>
</protein>
<name>RGA4R_ORYSJ</name>
<keyword id="KW-0067">ATP-binding</keyword>
<keyword id="KW-0175">Coiled coil</keyword>
<keyword id="KW-0963">Cytoplasm</keyword>
<keyword id="KW-0433">Leucine-rich repeat</keyword>
<keyword id="KW-0547">Nucleotide-binding</keyword>
<keyword id="KW-0611">Plant defense</keyword>
<keyword id="KW-0677">Repeat</keyword>
<sequence>MEAALLSGFIKAILPRLFSLVDDKHKLHKGVKGDIDFLIKELRMIVGAIDDDLSLDHPAAAAVQTLCMEDLRELAHGIEDCIDGVLYRAARDQQQSPVRRAVQAPKKLQRNLQLAQQLQRLKRMAAEANQRKQRYTAAAPGQHGQVYSSAAAQVDEPWPSCSSASDPRIHEADLVGVDADREELLEQLAERQPEQLKVIAIVGFCGLGKTALAAEAYNRETGGGRFERHAWVCAGHRSAREVLGELLRRLDADGRSFHGDSDAGQLCVDIRQQLEKNRYFIVIDDIQTEDQWKSIKSAFPTDKDIGSRIVVTTTIQSVANACCSANGYLHKMSRLDKNCSKQLLSKKACPERYSHYKQPDSAAILKKCDGQPLALVTIGEFLQANGWPTGPNCEDLCNRLHYHLENDKTLERMWRVLVRNYTSLPGHALKACLLYFGMFPSDHPIRRKSLLRRWLAEGFVEPLSSSSNIDSTAAFNVLMDRNIIEPINVSNNDKVKTCQTYGMMREFISHMSISQNFVTFFCDDKFVPKYVRRLSLHGDTVVNGDNFNGIDLSLVRSLAVFGEAGTTVLDFSKYQLLRVLDLEKCDDLKDDHLKEICNLVLLKYLSLGGNISKLPKDIAKLKDLEALDVRRSKVKIMPVEVFGLPCLIHLLGKFKLSDKVKQKTEVQEFLLKGKSNLQTLAGFASNGSEGFLHLMRYMNKLRKLKIWCTSSAGSTDWTDLREAIQQFILDEKEANIGTRSLSLHFSGCSEDAINSLKEPCYLSSLKLHGNFPQLPQFVTSLRGLKELCLSSTKFTTGLLEALSNLSYLQYLKLVADELEKFIIKVQGFPRLLRLCIVLQYPTFPVIEEGALPFLVTLQLLCKDLHGLSDIQIECFKHLQEVTLHSGVTPATRQEWVKAAKEHPNRPKVLLLKSVDTAESEHTDVDSVMEAVKSETTEYSIAPEGPEQVNNKMQLDHGLESSSVLNKQNNFADQSSSKDQLHYSFNNMGLSDVSCCE</sequence>
<proteinExistence type="evidence at protein level"/>
<accession>F7J0M4</accession>
<accession>F7J0M2</accession>
<accession>F7J0M3</accession>
<reference key="1">
    <citation type="journal article" date="2011" name="Plant J.">
        <title>A multifaceted genomics approach allows the isolation of the rice Pia-blast resistance gene consisting of two adjacent NBS-LRR protein genes.</title>
        <authorList>
            <person name="Okuyama Y."/>
            <person name="Kanzaki H."/>
            <person name="Abe A."/>
            <person name="Yoshida K."/>
            <person name="Tamiru M."/>
            <person name="Saitoh H."/>
            <person name="Fujibe T."/>
            <person name="Matsumura H."/>
            <person name="Shenton M."/>
            <person name="Galam D.C."/>
            <person name="Undan J."/>
            <person name="Ito A."/>
            <person name="Sone T."/>
            <person name="Terauchi R."/>
        </authorList>
    </citation>
    <scope>NUCLEOTIDE SEQUENCE [GENOMIC DNA / MRNA]</scope>
    <scope>FUNCTION</scope>
    <scope>TISSUE SPECIFICITY</scope>
    <scope>MUTAGENESIS OF CYS-349</scope>
    <source>
        <strain evidence="8 9 10">cv. Aichi asahi</strain>
        <strain evidence="8 9 10">cv. Sasanishiki</strain>
        <tissue evidence="8 9 10">Leaf</tissue>
    </source>
</reference>
<reference key="2">
    <citation type="journal article" date="2013" name="Plant Cell">
        <title>The rice resistance protein pair RGA4/RGA5 recognizes the Magnaporthe oryzae effectors AVR-Pia and AVR1-CO39 by direct binding.</title>
        <authorList>
            <person name="Cesari S."/>
            <person name="Thilliez G."/>
            <person name="Ribot C."/>
            <person name="Chalvon V."/>
            <person name="Michel C."/>
            <person name="Jauneau A."/>
            <person name="Rivas S."/>
            <person name="Alaux L."/>
            <person name="Kanzaki H."/>
            <person name="Okuyama Y."/>
            <person name="Morel J.B."/>
            <person name="Fournier E."/>
            <person name="Tharreau D."/>
            <person name="Terauchi R."/>
            <person name="Kroj T."/>
        </authorList>
    </citation>
    <scope>FUNCTION</scope>
    <scope>MUTAGENESIS OF CYS-349</scope>
    <source>
        <strain>cv. Sasanishiki</strain>
    </source>
</reference>
<reference key="3">
    <citation type="journal article" date="2014" name="EMBO J.">
        <title>The NB-LRR proteins RGA4 and RGA5 interact functionally and physically to confer disease resistance.</title>
        <authorList>
            <person name="Cesari S."/>
            <person name="Kanzaki H."/>
            <person name="Fujiwara T."/>
            <person name="Bernoux M."/>
            <person name="Chalvon V."/>
            <person name="Kawano Y."/>
            <person name="Shimamoto K."/>
            <person name="Dodds P."/>
            <person name="Terauchi R."/>
            <person name="Kroj T."/>
        </authorList>
    </citation>
    <scope>INTERACTION WITH RGA5</scope>
    <scope>SUBUNIT</scope>
    <scope>FUNCTION</scope>
    <scope>MUTAGENESIS OF LYS-209 AND GLY-502</scope>
    <scope>SUBCELLULAR LOCATION</scope>
    <source>
        <strain>cv. Sasanishiki</strain>
    </source>
</reference>
<reference key="4">
    <citation type="journal article" date="2014" name="Front. Plant Sci.">
        <title>A novel conserved mechanism for plant NLR protein pairs: the 'integrated decoy' hypothesis.</title>
        <authorList>
            <person name="Cesari S."/>
            <person name="Bernoux M."/>
            <person name="Moncuquet P."/>
            <person name="Kroj T."/>
            <person name="Dodds P.N."/>
        </authorList>
    </citation>
    <scope>REVIEW</scope>
</reference>
<reference key="5">
    <citation type="journal article" date="2016" name="Plant J.">
        <title>Ectopic activation of the rice NLR heteropair RGA4/RGA5 confers resistance to bacterial blight and bacterial leaf streak diseases.</title>
        <authorList>
            <person name="Hutin M."/>
            <person name="Cesari S."/>
            <person name="Chalvon V."/>
            <person name="Michel C."/>
            <person name="Tran T.T."/>
            <person name="Boch J."/>
            <person name="Koebnik R."/>
            <person name="Szurek B."/>
            <person name="Kroj T."/>
        </authorList>
    </citation>
    <scope>FUNCTION</scope>
    <source>
        <strain>cv. Kitaake</strain>
    </source>
</reference>
<feature type="chain" id="PRO_0000444659" description="Disease resistance protein RGA4">
    <location>
        <begin position="1"/>
        <end position="996"/>
    </location>
</feature>
<feature type="domain" description="NB-ARC" evidence="1">
    <location>
        <begin position="180"/>
        <end position="462"/>
    </location>
</feature>
<feature type="repeat" description="LRR 1" evidence="1">
    <location>
        <begin position="481"/>
        <end position="503"/>
    </location>
</feature>
<feature type="repeat" description="LRR 2" evidence="1">
    <location>
        <begin position="504"/>
        <end position="528"/>
    </location>
</feature>
<feature type="repeat" description="LRR 3" evidence="1">
    <location>
        <begin position="529"/>
        <end position="549"/>
    </location>
</feature>
<feature type="repeat" description="LRR 4" evidence="1">
    <location>
        <begin position="577"/>
        <end position="599"/>
    </location>
</feature>
<feature type="repeat" description="LRR 5" evidence="1">
    <location>
        <begin position="600"/>
        <end position="621"/>
    </location>
</feature>
<feature type="repeat" description="LRR 6" evidence="1">
    <location>
        <begin position="622"/>
        <end position="644"/>
    </location>
</feature>
<feature type="repeat" description="LRR 7" evidence="1">
    <location>
        <begin position="698"/>
        <end position="722"/>
    </location>
</feature>
<feature type="repeat" description="LRR 8" evidence="1">
    <location>
        <begin position="759"/>
        <end position="781"/>
    </location>
</feature>
<feature type="repeat" description="LRR 9" evidence="1">
    <location>
        <begin position="782"/>
        <end position="804"/>
    </location>
</feature>
<feature type="repeat" description="LRR 10" evidence="1">
    <location>
        <begin position="805"/>
        <end position="830"/>
    </location>
</feature>
<feature type="repeat" description="LRR 11" evidence="1">
    <location>
        <begin position="851"/>
        <end position="874"/>
    </location>
</feature>
<feature type="region of interest" description="Structured coiled coil (CC) domain" evidence="6">
    <location>
        <begin position="1"/>
        <end position="176"/>
    </location>
</feature>
<feature type="coiled-coil region" evidence="1">
    <location>
        <begin position="111"/>
        <end position="138"/>
    </location>
</feature>
<feature type="mutagenesis site" description="Abolishes resistance to M.oryzae pathogen." evidence="4">
    <original>K</original>
    <variation>R</variation>
    <location>
        <position position="209"/>
    </location>
</feature>
<feature type="mutagenesis site" description="Abolishes resistance to M.oryzae pathogen." evidence="2 3">
    <original>C</original>
    <variation>F</variation>
    <location>
        <position position="349"/>
    </location>
</feature>
<feature type="mutagenesis site" description="Abolishes resistance to M.oryzae pathogen." evidence="4">
    <original>G</original>
    <variation>D</variation>
    <location>
        <position position="502"/>
    </location>
</feature>
<evidence type="ECO:0000255" key="1"/>
<evidence type="ECO:0000269" key="2">
    <source>
    </source>
</evidence>
<evidence type="ECO:0000269" key="3">
    <source>
    </source>
</evidence>
<evidence type="ECO:0000269" key="4">
    <source>
    </source>
</evidence>
<evidence type="ECO:0000269" key="5">
    <source>
    </source>
</evidence>
<evidence type="ECO:0000303" key="6">
    <source>
    </source>
</evidence>
<evidence type="ECO:0000305" key="7"/>
<evidence type="ECO:0000312" key="8">
    <source>
        <dbReference type="EMBL" id="BAK39920.1"/>
    </source>
</evidence>
<evidence type="ECO:0000312" key="9">
    <source>
        <dbReference type="EMBL" id="BAK39921.1"/>
    </source>
</evidence>
<evidence type="ECO:0000312" key="10">
    <source>
        <dbReference type="EMBL" id="BAK39922.1"/>
    </source>
</evidence>
<organism>
    <name type="scientific">Oryza sativa subsp. japonica</name>
    <name type="common">Rice</name>
    <dbReference type="NCBI Taxonomy" id="39947"/>
    <lineage>
        <taxon>Eukaryota</taxon>
        <taxon>Viridiplantae</taxon>
        <taxon>Streptophyta</taxon>
        <taxon>Embryophyta</taxon>
        <taxon>Tracheophyta</taxon>
        <taxon>Spermatophyta</taxon>
        <taxon>Magnoliopsida</taxon>
        <taxon>Liliopsida</taxon>
        <taxon>Poales</taxon>
        <taxon>Poaceae</taxon>
        <taxon>BOP clade</taxon>
        <taxon>Oryzoideae</taxon>
        <taxon>Oryzeae</taxon>
        <taxon>Oryzinae</taxon>
        <taxon>Oryza</taxon>
        <taxon>Oryza sativa</taxon>
    </lineage>
</organism>
<dbReference type="EMBL" id="AB604621">
    <property type="protein sequence ID" value="BAK39920.1"/>
    <property type="molecule type" value="Genomic_DNA"/>
</dbReference>
<dbReference type="EMBL" id="AB604621">
    <property type="protein sequence ID" value="BAK39921.1"/>
    <property type="molecule type" value="Genomic_DNA"/>
</dbReference>
<dbReference type="EMBL" id="AB604622">
    <property type="protein sequence ID" value="BAK39922.1"/>
    <property type="molecule type" value="mRNA"/>
</dbReference>
<dbReference type="SMR" id="F7J0M4"/>
<dbReference type="GO" id="GO:0005737">
    <property type="term" value="C:cytoplasm"/>
    <property type="evidence" value="ECO:0000314"/>
    <property type="project" value="UniProtKB"/>
</dbReference>
<dbReference type="GO" id="GO:0043531">
    <property type="term" value="F:ADP binding"/>
    <property type="evidence" value="ECO:0007669"/>
    <property type="project" value="InterPro"/>
</dbReference>
<dbReference type="GO" id="GO:0005524">
    <property type="term" value="F:ATP binding"/>
    <property type="evidence" value="ECO:0007669"/>
    <property type="project" value="UniProtKB-KW"/>
</dbReference>
<dbReference type="GO" id="GO:0042742">
    <property type="term" value="P:defense response to bacterium"/>
    <property type="evidence" value="ECO:0000314"/>
    <property type="project" value="UniProtKB"/>
</dbReference>
<dbReference type="GO" id="GO:0002758">
    <property type="term" value="P:innate immune response-activating signaling pathway"/>
    <property type="evidence" value="ECO:0000314"/>
    <property type="project" value="UniProtKB"/>
</dbReference>
<dbReference type="GO" id="GO:0009626">
    <property type="term" value="P:plant-type hypersensitive response"/>
    <property type="evidence" value="ECO:0000315"/>
    <property type="project" value="UniProtKB"/>
</dbReference>
<dbReference type="FunFam" id="1.10.10.10:FF:000322">
    <property type="entry name" value="Probable disease resistance protein At1g63360"/>
    <property type="match status" value="1"/>
</dbReference>
<dbReference type="Gene3D" id="1.20.5.4130">
    <property type="match status" value="1"/>
</dbReference>
<dbReference type="Gene3D" id="1.10.8.430">
    <property type="entry name" value="Helical domain of apoptotic protease-activating factors"/>
    <property type="match status" value="1"/>
</dbReference>
<dbReference type="Gene3D" id="3.40.50.300">
    <property type="entry name" value="P-loop containing nucleotide triphosphate hydrolases"/>
    <property type="match status" value="1"/>
</dbReference>
<dbReference type="Gene3D" id="3.80.10.10">
    <property type="entry name" value="Ribonuclease Inhibitor"/>
    <property type="match status" value="1"/>
</dbReference>
<dbReference type="Gene3D" id="1.10.10.10">
    <property type="entry name" value="Winged helix-like DNA-binding domain superfamily/Winged helix DNA-binding domain"/>
    <property type="match status" value="1"/>
</dbReference>
<dbReference type="InterPro" id="IPR042197">
    <property type="entry name" value="Apaf_helical"/>
</dbReference>
<dbReference type="InterPro" id="IPR044974">
    <property type="entry name" value="Disease_R_plants"/>
</dbReference>
<dbReference type="InterPro" id="IPR032675">
    <property type="entry name" value="LRR_dom_sf"/>
</dbReference>
<dbReference type="InterPro" id="IPR055414">
    <property type="entry name" value="LRR_R13L4/SHOC2-like"/>
</dbReference>
<dbReference type="InterPro" id="IPR002182">
    <property type="entry name" value="NB-ARC"/>
</dbReference>
<dbReference type="InterPro" id="IPR027417">
    <property type="entry name" value="P-loop_NTPase"/>
</dbReference>
<dbReference type="InterPro" id="IPR041118">
    <property type="entry name" value="Rx_N"/>
</dbReference>
<dbReference type="InterPro" id="IPR036388">
    <property type="entry name" value="WH-like_DNA-bd_sf"/>
</dbReference>
<dbReference type="PANTHER" id="PTHR23155:SF1233">
    <property type="entry name" value="DISEASE RESISTANCE PROTEIN RGA4"/>
    <property type="match status" value="1"/>
</dbReference>
<dbReference type="PANTHER" id="PTHR23155">
    <property type="entry name" value="DISEASE RESISTANCE PROTEIN RP"/>
    <property type="match status" value="1"/>
</dbReference>
<dbReference type="Pfam" id="PF23598">
    <property type="entry name" value="LRR_14"/>
    <property type="match status" value="1"/>
</dbReference>
<dbReference type="Pfam" id="PF00931">
    <property type="entry name" value="NB-ARC"/>
    <property type="match status" value="1"/>
</dbReference>
<dbReference type="Pfam" id="PF18052">
    <property type="entry name" value="Rx_N"/>
    <property type="match status" value="1"/>
</dbReference>
<dbReference type="Pfam" id="PF23559">
    <property type="entry name" value="WH_DRP"/>
    <property type="match status" value="1"/>
</dbReference>
<dbReference type="PRINTS" id="PR00364">
    <property type="entry name" value="DISEASERSIST"/>
</dbReference>
<dbReference type="SUPFAM" id="SSF52058">
    <property type="entry name" value="L domain-like"/>
    <property type="match status" value="1"/>
</dbReference>
<dbReference type="SUPFAM" id="SSF52540">
    <property type="entry name" value="P-loop containing nucleoside triphosphate hydrolases"/>
    <property type="match status" value="1"/>
</dbReference>